<gene>
    <name evidence="1" type="primary">uvrB</name>
    <name type="ordered locus">SPD_1096</name>
</gene>
<organism>
    <name type="scientific">Streptococcus pneumoniae serotype 2 (strain D39 / NCTC 7466)</name>
    <dbReference type="NCBI Taxonomy" id="373153"/>
    <lineage>
        <taxon>Bacteria</taxon>
        <taxon>Bacillati</taxon>
        <taxon>Bacillota</taxon>
        <taxon>Bacilli</taxon>
        <taxon>Lactobacillales</taxon>
        <taxon>Streptococcaceae</taxon>
        <taxon>Streptococcus</taxon>
    </lineage>
</organism>
<name>UVRB_STRP2</name>
<evidence type="ECO:0000255" key="1">
    <source>
        <dbReference type="HAMAP-Rule" id="MF_00204"/>
    </source>
</evidence>
<keyword id="KW-0067">ATP-binding</keyword>
<keyword id="KW-0963">Cytoplasm</keyword>
<keyword id="KW-0227">DNA damage</keyword>
<keyword id="KW-0228">DNA excision</keyword>
<keyword id="KW-0234">DNA repair</keyword>
<keyword id="KW-0267">Excision nuclease</keyword>
<keyword id="KW-0347">Helicase</keyword>
<keyword id="KW-0378">Hydrolase</keyword>
<keyword id="KW-0547">Nucleotide-binding</keyword>
<keyword id="KW-1185">Reference proteome</keyword>
<keyword id="KW-0742">SOS response</keyword>
<proteinExistence type="inferred from homology"/>
<feature type="chain" id="PRO_1000077925" description="UvrABC system protein B">
    <location>
        <begin position="1"/>
        <end position="662"/>
    </location>
</feature>
<feature type="domain" description="Helicase ATP-binding" evidence="1">
    <location>
        <begin position="31"/>
        <end position="188"/>
    </location>
</feature>
<feature type="domain" description="Helicase C-terminal" evidence="1">
    <location>
        <begin position="435"/>
        <end position="601"/>
    </location>
</feature>
<feature type="domain" description="UVR" evidence="1">
    <location>
        <begin position="626"/>
        <end position="661"/>
    </location>
</feature>
<feature type="short sequence motif" description="Beta-hairpin">
    <location>
        <begin position="97"/>
        <end position="120"/>
    </location>
</feature>
<feature type="binding site" evidence="1">
    <location>
        <begin position="44"/>
        <end position="51"/>
    </location>
    <ligand>
        <name>ATP</name>
        <dbReference type="ChEBI" id="CHEBI:30616"/>
    </ligand>
</feature>
<comment type="function">
    <text evidence="1">The UvrABC repair system catalyzes the recognition and processing of DNA lesions. A damage recognition complex composed of 2 UvrA and 2 UvrB subunits scans DNA for abnormalities. Upon binding of the UvrA(2)B(2) complex to a putative damaged site, the DNA wraps around one UvrB monomer. DNA wrap is dependent on ATP binding by UvrB and probably causes local melting of the DNA helix, facilitating insertion of UvrB beta-hairpin between the DNA strands. Then UvrB probes one DNA strand for the presence of a lesion. If a lesion is found the UvrA subunits dissociate and the UvrB-DNA preincision complex is formed. This complex is subsequently bound by UvrC and the second UvrB is released. If no lesion is found, the DNA wraps around the other UvrB subunit that will check the other stand for damage.</text>
</comment>
<comment type="subunit">
    <text evidence="1">Forms a heterotetramer with UvrA during the search for lesions. Interacts with UvrC in an incision complex.</text>
</comment>
<comment type="subcellular location">
    <subcellularLocation>
        <location evidence="1">Cytoplasm</location>
    </subcellularLocation>
</comment>
<comment type="domain">
    <text evidence="1">The beta-hairpin motif is involved in DNA binding.</text>
</comment>
<comment type="similarity">
    <text evidence="1">Belongs to the UvrB family.</text>
</comment>
<reference key="1">
    <citation type="journal article" date="2007" name="J. Bacteriol.">
        <title>Genome sequence of Avery's virulent serotype 2 strain D39 of Streptococcus pneumoniae and comparison with that of unencapsulated laboratory strain R6.</title>
        <authorList>
            <person name="Lanie J.A."/>
            <person name="Ng W.-L."/>
            <person name="Kazmierczak K.M."/>
            <person name="Andrzejewski T.M."/>
            <person name="Davidsen T.M."/>
            <person name="Wayne K.J."/>
            <person name="Tettelin H."/>
            <person name="Glass J.I."/>
            <person name="Winkler M.E."/>
        </authorList>
    </citation>
    <scope>NUCLEOTIDE SEQUENCE [LARGE SCALE GENOMIC DNA]</scope>
    <source>
        <strain>D39 / NCTC 7466</strain>
    </source>
</reference>
<accession>Q04K81</accession>
<protein>
    <recommendedName>
        <fullName evidence="1">UvrABC system protein B</fullName>
        <shortName evidence="1">Protein UvrB</shortName>
    </recommendedName>
    <alternativeName>
        <fullName evidence="1">Excinuclease ABC subunit B</fullName>
    </alternativeName>
</protein>
<dbReference type="EMBL" id="CP000410">
    <property type="protein sequence ID" value="ABJ54782.1"/>
    <property type="molecule type" value="Genomic_DNA"/>
</dbReference>
<dbReference type="RefSeq" id="WP_000607031.1">
    <property type="nucleotide sequence ID" value="NZ_JAMLJR010000006.1"/>
</dbReference>
<dbReference type="SMR" id="Q04K81"/>
<dbReference type="PaxDb" id="373153-SPD_1096"/>
<dbReference type="KEGG" id="spd:SPD_1096"/>
<dbReference type="eggNOG" id="COG0556">
    <property type="taxonomic scope" value="Bacteria"/>
</dbReference>
<dbReference type="HOGENOM" id="CLU_009621_2_1_9"/>
<dbReference type="BioCyc" id="SPNE373153:G1G6V-1187-MONOMER"/>
<dbReference type="Proteomes" id="UP000001452">
    <property type="component" value="Chromosome"/>
</dbReference>
<dbReference type="GO" id="GO:0005737">
    <property type="term" value="C:cytoplasm"/>
    <property type="evidence" value="ECO:0007669"/>
    <property type="project" value="UniProtKB-SubCell"/>
</dbReference>
<dbReference type="GO" id="GO:0009380">
    <property type="term" value="C:excinuclease repair complex"/>
    <property type="evidence" value="ECO:0007669"/>
    <property type="project" value="InterPro"/>
</dbReference>
<dbReference type="GO" id="GO:0005524">
    <property type="term" value="F:ATP binding"/>
    <property type="evidence" value="ECO:0007669"/>
    <property type="project" value="UniProtKB-UniRule"/>
</dbReference>
<dbReference type="GO" id="GO:0016887">
    <property type="term" value="F:ATP hydrolysis activity"/>
    <property type="evidence" value="ECO:0007669"/>
    <property type="project" value="InterPro"/>
</dbReference>
<dbReference type="GO" id="GO:0003677">
    <property type="term" value="F:DNA binding"/>
    <property type="evidence" value="ECO:0007669"/>
    <property type="project" value="UniProtKB-UniRule"/>
</dbReference>
<dbReference type="GO" id="GO:0009381">
    <property type="term" value="F:excinuclease ABC activity"/>
    <property type="evidence" value="ECO:0007669"/>
    <property type="project" value="UniProtKB-UniRule"/>
</dbReference>
<dbReference type="GO" id="GO:0004386">
    <property type="term" value="F:helicase activity"/>
    <property type="evidence" value="ECO:0007669"/>
    <property type="project" value="UniProtKB-KW"/>
</dbReference>
<dbReference type="GO" id="GO:0006289">
    <property type="term" value="P:nucleotide-excision repair"/>
    <property type="evidence" value="ECO:0007669"/>
    <property type="project" value="UniProtKB-UniRule"/>
</dbReference>
<dbReference type="GO" id="GO:0009432">
    <property type="term" value="P:SOS response"/>
    <property type="evidence" value="ECO:0007669"/>
    <property type="project" value="UniProtKB-UniRule"/>
</dbReference>
<dbReference type="CDD" id="cd17916">
    <property type="entry name" value="DEXHc_UvrB"/>
    <property type="match status" value="1"/>
</dbReference>
<dbReference type="CDD" id="cd18790">
    <property type="entry name" value="SF2_C_UvrB"/>
    <property type="match status" value="1"/>
</dbReference>
<dbReference type="Gene3D" id="3.40.50.300">
    <property type="entry name" value="P-loop containing nucleotide triphosphate hydrolases"/>
    <property type="match status" value="3"/>
</dbReference>
<dbReference type="Gene3D" id="4.10.860.10">
    <property type="entry name" value="UVR domain"/>
    <property type="match status" value="1"/>
</dbReference>
<dbReference type="HAMAP" id="MF_00204">
    <property type="entry name" value="UvrB"/>
    <property type="match status" value="1"/>
</dbReference>
<dbReference type="InterPro" id="IPR006935">
    <property type="entry name" value="Helicase/UvrB_N"/>
</dbReference>
<dbReference type="InterPro" id="IPR014001">
    <property type="entry name" value="Helicase_ATP-bd"/>
</dbReference>
<dbReference type="InterPro" id="IPR001650">
    <property type="entry name" value="Helicase_C-like"/>
</dbReference>
<dbReference type="InterPro" id="IPR027417">
    <property type="entry name" value="P-loop_NTPase"/>
</dbReference>
<dbReference type="InterPro" id="IPR001943">
    <property type="entry name" value="UVR_dom"/>
</dbReference>
<dbReference type="InterPro" id="IPR036876">
    <property type="entry name" value="UVR_dom_sf"/>
</dbReference>
<dbReference type="InterPro" id="IPR004807">
    <property type="entry name" value="UvrB"/>
</dbReference>
<dbReference type="InterPro" id="IPR041471">
    <property type="entry name" value="UvrB_inter"/>
</dbReference>
<dbReference type="InterPro" id="IPR024759">
    <property type="entry name" value="UvrB_YAD/RRR_dom"/>
</dbReference>
<dbReference type="NCBIfam" id="NF003673">
    <property type="entry name" value="PRK05298.1"/>
    <property type="match status" value="1"/>
</dbReference>
<dbReference type="NCBIfam" id="TIGR00631">
    <property type="entry name" value="uvrb"/>
    <property type="match status" value="1"/>
</dbReference>
<dbReference type="PANTHER" id="PTHR24029">
    <property type="entry name" value="UVRABC SYSTEM PROTEIN B"/>
    <property type="match status" value="1"/>
</dbReference>
<dbReference type="PANTHER" id="PTHR24029:SF0">
    <property type="entry name" value="UVRABC SYSTEM PROTEIN B"/>
    <property type="match status" value="1"/>
</dbReference>
<dbReference type="Pfam" id="PF00271">
    <property type="entry name" value="Helicase_C"/>
    <property type="match status" value="1"/>
</dbReference>
<dbReference type="Pfam" id="PF04851">
    <property type="entry name" value="ResIII"/>
    <property type="match status" value="1"/>
</dbReference>
<dbReference type="Pfam" id="PF02151">
    <property type="entry name" value="UVR"/>
    <property type="match status" value="1"/>
</dbReference>
<dbReference type="Pfam" id="PF12344">
    <property type="entry name" value="UvrB"/>
    <property type="match status" value="1"/>
</dbReference>
<dbReference type="Pfam" id="PF17757">
    <property type="entry name" value="UvrB_inter"/>
    <property type="match status" value="1"/>
</dbReference>
<dbReference type="SMART" id="SM00487">
    <property type="entry name" value="DEXDc"/>
    <property type="match status" value="1"/>
</dbReference>
<dbReference type="SMART" id="SM00490">
    <property type="entry name" value="HELICc"/>
    <property type="match status" value="1"/>
</dbReference>
<dbReference type="SUPFAM" id="SSF46600">
    <property type="entry name" value="C-terminal UvrC-binding domain of UvrB"/>
    <property type="match status" value="1"/>
</dbReference>
<dbReference type="SUPFAM" id="SSF52540">
    <property type="entry name" value="P-loop containing nucleoside triphosphate hydrolases"/>
    <property type="match status" value="2"/>
</dbReference>
<dbReference type="PROSITE" id="PS51192">
    <property type="entry name" value="HELICASE_ATP_BIND_1"/>
    <property type="match status" value="1"/>
</dbReference>
<dbReference type="PROSITE" id="PS51194">
    <property type="entry name" value="HELICASE_CTER"/>
    <property type="match status" value="1"/>
</dbReference>
<dbReference type="PROSITE" id="PS50151">
    <property type="entry name" value="UVR"/>
    <property type="match status" value="1"/>
</dbReference>
<sequence>MINHITDNQFKLVSKYQPSGDQPQAIEQLVDNIEGGEKAQILMGATGTGKTYTMSQVISKVNKPTLVIAHNKTLAGQLYGEFKEFFPENAVEYFVSYYDYYQPEAYVPSSDTYIEKDSSVNDEIDKLRHSATSALLERNDVIVVASVSCIYGLGSPKEYADSVVSLRPGLEISRDKLLNDLVDIQFERNDIDFQRGRFRVRGDVVEIFPASRDEHAFRVEFFGDEIDRIREVEALTGQVLGEVDHLAIFPATHFVTNDDHMEVAIAKIQAELEEQLAVFEKEGKLLEAQRLKQRTEYDIEMLREMGYTNGVENYSRHMDGRSEGEPPYTLLDFFPDDFLIMIDESHMTMGQIKGMYNGDRSRKEMLVNYGFRLPSALDNRPLRREEFESHVHQIVYVSATPGDYENEQTETVIEQIIRPTGLLDPEVEVRPTMGQIDDLLGEINARVEKNERTFITTLTKKMAEDLTDYFKEMGIKVKYMHSDIKTLERTEIIRDLRLGVFDVLVGINLLREGIDVPEVSLVAILDADKEGFLRNERGLIQTIGRAARNSEGHVIMYADTVTQSMQRAIDETARRRKIQMAYNEEHGIVPQTIKKEIRDLIAVTKAVAKEEDKEVDINSLNKQERKELVKKLEKQMQEAVEVLDFELAAQIRDMMLEVKALD</sequence>